<reference key="1">
    <citation type="journal article" date="2006" name="Proc. Natl. Acad. Sci. U.S.A.">
        <title>Comparative genomics of the lactic acid bacteria.</title>
        <authorList>
            <person name="Makarova K.S."/>
            <person name="Slesarev A."/>
            <person name="Wolf Y.I."/>
            <person name="Sorokin A."/>
            <person name="Mirkin B."/>
            <person name="Koonin E.V."/>
            <person name="Pavlov A."/>
            <person name="Pavlova N."/>
            <person name="Karamychev V."/>
            <person name="Polouchine N."/>
            <person name="Shakhova V."/>
            <person name="Grigoriev I."/>
            <person name="Lou Y."/>
            <person name="Rohksar D."/>
            <person name="Lucas S."/>
            <person name="Huang K."/>
            <person name="Goodstein D.M."/>
            <person name="Hawkins T."/>
            <person name="Plengvidhya V."/>
            <person name="Welker D."/>
            <person name="Hughes J."/>
            <person name="Goh Y."/>
            <person name="Benson A."/>
            <person name="Baldwin K."/>
            <person name="Lee J.-H."/>
            <person name="Diaz-Muniz I."/>
            <person name="Dosti B."/>
            <person name="Smeianov V."/>
            <person name="Wechter W."/>
            <person name="Barabote R."/>
            <person name="Lorca G."/>
            <person name="Altermann E."/>
            <person name="Barrangou R."/>
            <person name="Ganesan B."/>
            <person name="Xie Y."/>
            <person name="Rawsthorne H."/>
            <person name="Tamir D."/>
            <person name="Parker C."/>
            <person name="Breidt F."/>
            <person name="Broadbent J.R."/>
            <person name="Hutkins R."/>
            <person name="O'Sullivan D."/>
            <person name="Steele J."/>
            <person name="Unlu G."/>
            <person name="Saier M.H. Jr."/>
            <person name="Klaenhammer T."/>
            <person name="Richardson P."/>
            <person name="Kozyavkin S."/>
            <person name="Weimer B.C."/>
            <person name="Mills D.A."/>
        </authorList>
    </citation>
    <scope>NUCLEOTIDE SEQUENCE [LARGE SCALE GENOMIC DNA]</scope>
    <source>
        <strain>ATCC 8293 / DSM 20343 / BCRC 11652 / CCM 1803 / JCM 6124 / NCDO 523 / NBRC 100496 / NCIMB 8023 / NCTC 12954 / NRRL B-1118 / 37Y</strain>
    </source>
</reference>
<sequence>MANDVIEIEGKVKETLPNAMFQVELENGAVILAHVSGKIRKNFIRILPGDRVTVEMSPYDLTKGRITYRFR</sequence>
<comment type="function">
    <text evidence="1">One of the essential components for the initiation of protein synthesis. Stabilizes the binding of IF-2 and IF-3 on the 30S subunit to which N-formylmethionyl-tRNA(fMet) subsequently binds. Helps modulate mRNA selection, yielding the 30S pre-initiation complex (PIC). Upon addition of the 50S ribosomal subunit IF-1, IF-2 and IF-3 are released leaving the mature 70S translation initiation complex.</text>
</comment>
<comment type="subunit">
    <text evidence="1">Component of the 30S ribosomal translation pre-initiation complex which assembles on the 30S ribosome in the order IF-2 and IF-3, IF-1 and N-formylmethionyl-tRNA(fMet); mRNA recruitment can occur at any time during PIC assembly.</text>
</comment>
<comment type="subcellular location">
    <subcellularLocation>
        <location evidence="1">Cytoplasm</location>
    </subcellularLocation>
</comment>
<comment type="similarity">
    <text evidence="1">Belongs to the IF-1 family.</text>
</comment>
<keyword id="KW-0963">Cytoplasm</keyword>
<keyword id="KW-0396">Initiation factor</keyword>
<keyword id="KW-0648">Protein biosynthesis</keyword>
<keyword id="KW-1185">Reference proteome</keyword>
<keyword id="KW-0694">RNA-binding</keyword>
<keyword id="KW-0699">rRNA-binding</keyword>
<organism>
    <name type="scientific">Leuconostoc mesenteroides subsp. mesenteroides (strain ATCC 8293 / DSM 20343 / BCRC 11652 / CCM 1803 / JCM 6124 / NCDO 523 / NBRC 100496 / NCIMB 8023 / NCTC 12954 / NRRL B-1118 / 37Y)</name>
    <dbReference type="NCBI Taxonomy" id="203120"/>
    <lineage>
        <taxon>Bacteria</taxon>
        <taxon>Bacillati</taxon>
        <taxon>Bacillota</taxon>
        <taxon>Bacilli</taxon>
        <taxon>Lactobacillales</taxon>
        <taxon>Lactobacillaceae</taxon>
        <taxon>Leuconostoc</taxon>
    </lineage>
</organism>
<dbReference type="EMBL" id="CP000414">
    <property type="protein sequence ID" value="ABJ61348.1"/>
    <property type="molecule type" value="Genomic_DNA"/>
</dbReference>
<dbReference type="RefSeq" id="WP_002816015.1">
    <property type="nucleotide sequence ID" value="NC_008531.1"/>
</dbReference>
<dbReference type="SMR" id="Q03ZM4"/>
<dbReference type="EnsemblBacteria" id="ABJ61348">
    <property type="protein sequence ID" value="ABJ61348"/>
    <property type="gene ID" value="LEUM_0217"/>
</dbReference>
<dbReference type="GeneID" id="97504960"/>
<dbReference type="KEGG" id="lme:LEUM_0217"/>
<dbReference type="eggNOG" id="COG0361">
    <property type="taxonomic scope" value="Bacteria"/>
</dbReference>
<dbReference type="HOGENOM" id="CLU_151267_1_0_9"/>
<dbReference type="Proteomes" id="UP000000362">
    <property type="component" value="Chromosome"/>
</dbReference>
<dbReference type="GO" id="GO:0005829">
    <property type="term" value="C:cytosol"/>
    <property type="evidence" value="ECO:0007669"/>
    <property type="project" value="TreeGrafter"/>
</dbReference>
<dbReference type="GO" id="GO:0043022">
    <property type="term" value="F:ribosome binding"/>
    <property type="evidence" value="ECO:0007669"/>
    <property type="project" value="UniProtKB-UniRule"/>
</dbReference>
<dbReference type="GO" id="GO:0019843">
    <property type="term" value="F:rRNA binding"/>
    <property type="evidence" value="ECO:0007669"/>
    <property type="project" value="UniProtKB-UniRule"/>
</dbReference>
<dbReference type="GO" id="GO:0003743">
    <property type="term" value="F:translation initiation factor activity"/>
    <property type="evidence" value="ECO:0007669"/>
    <property type="project" value="UniProtKB-UniRule"/>
</dbReference>
<dbReference type="CDD" id="cd04451">
    <property type="entry name" value="S1_IF1"/>
    <property type="match status" value="1"/>
</dbReference>
<dbReference type="FunFam" id="2.40.50.140:FF:000002">
    <property type="entry name" value="Translation initiation factor IF-1"/>
    <property type="match status" value="1"/>
</dbReference>
<dbReference type="Gene3D" id="2.40.50.140">
    <property type="entry name" value="Nucleic acid-binding proteins"/>
    <property type="match status" value="1"/>
</dbReference>
<dbReference type="HAMAP" id="MF_00075">
    <property type="entry name" value="IF_1"/>
    <property type="match status" value="1"/>
</dbReference>
<dbReference type="InterPro" id="IPR012340">
    <property type="entry name" value="NA-bd_OB-fold"/>
</dbReference>
<dbReference type="InterPro" id="IPR006196">
    <property type="entry name" value="RNA-binding_domain_S1_IF1"/>
</dbReference>
<dbReference type="InterPro" id="IPR003029">
    <property type="entry name" value="S1_domain"/>
</dbReference>
<dbReference type="InterPro" id="IPR004368">
    <property type="entry name" value="TIF_IF1"/>
</dbReference>
<dbReference type="NCBIfam" id="TIGR00008">
    <property type="entry name" value="infA"/>
    <property type="match status" value="1"/>
</dbReference>
<dbReference type="PANTHER" id="PTHR33370">
    <property type="entry name" value="TRANSLATION INITIATION FACTOR IF-1, CHLOROPLASTIC"/>
    <property type="match status" value="1"/>
</dbReference>
<dbReference type="PANTHER" id="PTHR33370:SF1">
    <property type="entry name" value="TRANSLATION INITIATION FACTOR IF-1, CHLOROPLASTIC"/>
    <property type="match status" value="1"/>
</dbReference>
<dbReference type="Pfam" id="PF01176">
    <property type="entry name" value="eIF-1a"/>
    <property type="match status" value="1"/>
</dbReference>
<dbReference type="SMART" id="SM00316">
    <property type="entry name" value="S1"/>
    <property type="match status" value="1"/>
</dbReference>
<dbReference type="SUPFAM" id="SSF50249">
    <property type="entry name" value="Nucleic acid-binding proteins"/>
    <property type="match status" value="1"/>
</dbReference>
<dbReference type="PROSITE" id="PS50832">
    <property type="entry name" value="S1_IF1_TYPE"/>
    <property type="match status" value="1"/>
</dbReference>
<gene>
    <name evidence="1" type="primary">infA</name>
    <name type="ordered locus">LEUM_0217</name>
</gene>
<evidence type="ECO:0000255" key="1">
    <source>
        <dbReference type="HAMAP-Rule" id="MF_00075"/>
    </source>
</evidence>
<protein>
    <recommendedName>
        <fullName evidence="1">Translation initiation factor IF-1</fullName>
    </recommendedName>
</protein>
<feature type="chain" id="PRO_0000338854" description="Translation initiation factor IF-1">
    <location>
        <begin position="1"/>
        <end position="71"/>
    </location>
</feature>
<feature type="domain" description="S1-like" evidence="1">
    <location>
        <begin position="1"/>
        <end position="71"/>
    </location>
</feature>
<accession>Q03ZM4</accession>
<proteinExistence type="inferred from homology"/>
<name>IF1_LEUMM</name>